<gene>
    <name type="primary">ACTB</name>
</gene>
<dbReference type="EC" id="3.6.4.-" evidence="4"/>
<dbReference type="EMBL" id="AB004047">
    <property type="protein sequence ID" value="BAA20266.1"/>
    <property type="molecule type" value="mRNA"/>
</dbReference>
<dbReference type="SMR" id="Q76N69"/>
<dbReference type="IntAct" id="Q76N69">
    <property type="interactions" value="2"/>
</dbReference>
<dbReference type="MINT" id="Q76N69"/>
<dbReference type="KEGG" id="csab:103246953"/>
<dbReference type="GO" id="GO:0015629">
    <property type="term" value="C:actin cytoskeleton"/>
    <property type="evidence" value="ECO:0000250"/>
    <property type="project" value="UniProtKB"/>
</dbReference>
<dbReference type="GO" id="GO:0005856">
    <property type="term" value="C:cytoskeleton"/>
    <property type="evidence" value="ECO:0000250"/>
    <property type="project" value="AgBase"/>
</dbReference>
<dbReference type="GO" id="GO:0097433">
    <property type="term" value="C:dense body"/>
    <property type="evidence" value="ECO:0000250"/>
    <property type="project" value="AgBase"/>
</dbReference>
<dbReference type="GO" id="GO:0005925">
    <property type="term" value="C:focal adhesion"/>
    <property type="evidence" value="ECO:0000250"/>
    <property type="project" value="AgBase"/>
</dbReference>
<dbReference type="GO" id="GO:0005634">
    <property type="term" value="C:nucleus"/>
    <property type="evidence" value="ECO:0000250"/>
    <property type="project" value="UniProtKB"/>
</dbReference>
<dbReference type="GO" id="GO:0005886">
    <property type="term" value="C:plasma membrane"/>
    <property type="evidence" value="ECO:0000250"/>
    <property type="project" value="AgBase"/>
</dbReference>
<dbReference type="GO" id="GO:0032991">
    <property type="term" value="C:protein-containing complex"/>
    <property type="evidence" value="ECO:0000250"/>
    <property type="project" value="UniProtKB"/>
</dbReference>
<dbReference type="GO" id="GO:0005524">
    <property type="term" value="F:ATP binding"/>
    <property type="evidence" value="ECO:0007669"/>
    <property type="project" value="UniProtKB-KW"/>
</dbReference>
<dbReference type="GO" id="GO:0016787">
    <property type="term" value="F:hydrolase activity"/>
    <property type="evidence" value="ECO:0007669"/>
    <property type="project" value="UniProtKB-KW"/>
</dbReference>
<dbReference type="CDD" id="cd10224">
    <property type="entry name" value="ASKHA_NBD_actin"/>
    <property type="match status" value="1"/>
</dbReference>
<dbReference type="FunFam" id="3.30.420.40:FF:000131">
    <property type="entry name" value="Actin, alpha skeletal muscle"/>
    <property type="match status" value="1"/>
</dbReference>
<dbReference type="FunFam" id="3.30.420.40:FF:000291">
    <property type="entry name" value="Actin, alpha skeletal muscle"/>
    <property type="match status" value="1"/>
</dbReference>
<dbReference type="FunFam" id="3.90.640.10:FF:000047">
    <property type="entry name" value="Actin, alpha skeletal muscle"/>
    <property type="match status" value="1"/>
</dbReference>
<dbReference type="FunFam" id="3.30.420.40:FF:000058">
    <property type="entry name" value="Putative actin-related protein 5"/>
    <property type="match status" value="1"/>
</dbReference>
<dbReference type="Gene3D" id="3.30.420.40">
    <property type="match status" value="2"/>
</dbReference>
<dbReference type="Gene3D" id="3.90.640.10">
    <property type="entry name" value="Actin, Chain A, domain 4"/>
    <property type="match status" value="1"/>
</dbReference>
<dbReference type="InterPro" id="IPR004000">
    <property type="entry name" value="Actin"/>
</dbReference>
<dbReference type="InterPro" id="IPR020902">
    <property type="entry name" value="Actin/actin-like_CS"/>
</dbReference>
<dbReference type="InterPro" id="IPR004001">
    <property type="entry name" value="Actin_CS"/>
</dbReference>
<dbReference type="InterPro" id="IPR043129">
    <property type="entry name" value="ATPase_NBD"/>
</dbReference>
<dbReference type="PANTHER" id="PTHR11937">
    <property type="entry name" value="ACTIN"/>
    <property type="match status" value="1"/>
</dbReference>
<dbReference type="Pfam" id="PF00022">
    <property type="entry name" value="Actin"/>
    <property type="match status" value="1"/>
</dbReference>
<dbReference type="PRINTS" id="PR00190">
    <property type="entry name" value="ACTIN"/>
</dbReference>
<dbReference type="SMART" id="SM00268">
    <property type="entry name" value="ACTIN"/>
    <property type="match status" value="1"/>
</dbReference>
<dbReference type="SUPFAM" id="SSF53067">
    <property type="entry name" value="Actin-like ATPase domain"/>
    <property type="match status" value="2"/>
</dbReference>
<dbReference type="PROSITE" id="PS00406">
    <property type="entry name" value="ACTINS_1"/>
    <property type="match status" value="1"/>
</dbReference>
<dbReference type="PROSITE" id="PS00432">
    <property type="entry name" value="ACTINS_2"/>
    <property type="match status" value="1"/>
</dbReference>
<dbReference type="PROSITE" id="PS01132">
    <property type="entry name" value="ACTINS_ACT_LIKE"/>
    <property type="match status" value="1"/>
</dbReference>
<feature type="chain" id="PRO_0000000765" description="Actin, cytoplasmic 1">
    <location>
        <begin position="1"/>
        <end position="375"/>
    </location>
</feature>
<feature type="initiator methionine" description="Removed; alternate" evidence="2">
    <location>
        <position position="1"/>
    </location>
</feature>
<feature type="chain" id="PRO_0000367070" description="Actin, cytoplasmic 1, N-terminally processed">
    <location>
        <begin position="2"/>
        <end position="375"/>
    </location>
</feature>
<feature type="modified residue" description="N-acetylmethionine" evidence="2">
    <location>
        <position position="1"/>
    </location>
</feature>
<feature type="modified residue" description="N-acetylaspartate; in Actin, cytoplasmic 1, N-terminally processed" evidence="2">
    <location>
        <position position="2"/>
    </location>
</feature>
<feature type="modified residue" description="Methionine (R)-sulfoxide" evidence="3">
    <location>
        <position position="44"/>
    </location>
</feature>
<feature type="modified residue" description="Methionine (R)-sulfoxide" evidence="3">
    <location>
        <position position="47"/>
    </location>
</feature>
<feature type="modified residue" description="Tele-methylhistidine" evidence="3">
    <location>
        <position position="73"/>
    </location>
</feature>
<feature type="modified residue" description="N6-methyllysine" evidence="2">
    <location>
        <position position="84"/>
    </location>
</feature>
<name>ACTB_CHLAE</name>
<protein>
    <recommendedName>
        <fullName>Actin, cytoplasmic 1</fullName>
        <ecNumber evidence="4">3.6.4.-</ecNumber>
    </recommendedName>
    <alternativeName>
        <fullName>Beta-actin</fullName>
    </alternativeName>
    <component>
        <recommendedName>
            <fullName>Actin, cytoplasmic 1, N-terminally processed</fullName>
        </recommendedName>
    </component>
</protein>
<comment type="function">
    <text evidence="2 5">Actin is a highly conserved protein that polymerizes to produce filaments that form cross-linked networks in the cytoplasm of cells (By similarity). Actin exists in both monomeric (G-actin) and polymeric (F-actin) forms, both forms playing key functions, such as cell motility and contraction (By similarity). In addition to their role in the cytoplasmic cytoskeleton, G- and F-actin also localize in the nucleus, and regulate gene transcription and motility and repair of damaged DNA (By similarity). Plays a role in the assembly of the gamma-tubulin ring complex (gTuRC), which regulates the minus-end nucleation of alpha-beta tubulin heterodimers that grow into microtubule protafilaments (By similarity). Part of the ACTR1A/ACTB filament around which the dynactin complex is built (By similarity). The dynactin multiprotein complex activates the molecular motor dynein for ultra-processive transport along microtubules (By similarity).</text>
</comment>
<comment type="catalytic activity">
    <reaction evidence="4">
        <text>ATP + H2O = ADP + phosphate + H(+)</text>
        <dbReference type="Rhea" id="RHEA:13065"/>
        <dbReference type="ChEBI" id="CHEBI:15377"/>
        <dbReference type="ChEBI" id="CHEBI:15378"/>
        <dbReference type="ChEBI" id="CHEBI:30616"/>
        <dbReference type="ChEBI" id="CHEBI:43474"/>
        <dbReference type="ChEBI" id="CHEBI:456216"/>
    </reaction>
</comment>
<comment type="subunit">
    <text evidence="1 2 3 5">Polymerization of globular actin (G-actin) leads to a structural filament (F-actin) in the form of a two-stranded helix (By similarity). Each actin can bind to 4 others (By similarity). Identified in a IGF2BP1-dependent mRNP granule complex containing untranslated mRNAs (By similarity). Component of the BAF complex, which includes at least actin (ACTB), ARID1A, ARID1B/BAF250, SMARCA2, SMARCA4/BRG1, ACTL6A/BAF53, ACTL6B/BAF53B, SMARCE1/BAF57 SMARCC1/BAF155, SMARCC2/BAF170, SMARCB1/SNF5/INI1, and one or more of SMARCD1/BAF60A, SMARCD2/BAF60B, or SMARCD3/BAF60C (By similarity). In muscle cells, the BAF complex also contains DPF3 (By similarity). Found in a complex with XPO6, Ran, ACTB and PFN1 (By similarity). Interacts with PFN1 (By similarity). Interacts with XPO6 and EMD (By similarity). Interacts with ERBB2 (By similarity). Interacts with GCSAM (By similarity). Interacts with TBC1D21 (By similarity). Interacts with CPNE1 (via VWFA domain) and CPNE4 (via VWFA domain) (By similarity). Interacts with DHX9 (via C-terminus); this interaction is direct and mediates the attachment to nuclear ribonucleoprotein complexes (By similarity). Interacts with FAM107A (By similarity). Associates with the gamma-tubulin ring complex (gTuRC) consisting of TUBGCP2, TUBGCP3, TUBGCP4, TUBGCP5 and TUBGCP6 and gamma-tubulin TUBG1 or TUBG2; within the complex, interacts with TUBGCP3 and TUBGCP6 to form a luminal bridge with MZT1 that stabilizes the initial structure during complex assembly (By similarity). Part of the ACTR1A/ACTB filament around which the dynactin complex is built (By similarity). The filament contains 8 copies of ACTR1A and 1 ACTB (By similarity). Interacts with TPRN which forms ring-like structures in the stereocilium taper region; the interaction may stabilize stereocilia in inner ear hair cells (By similarity). Interacts with AMOTL2 (via N-terminus), the interaction facilitates binding of cell junction complexes to actin fibers in endothelial cells (By similarity).</text>
</comment>
<comment type="subcellular location">
    <subcellularLocation>
        <location evidence="2">Cytoplasm</location>
        <location evidence="2">Cytoskeleton</location>
    </subcellularLocation>
    <subcellularLocation>
        <location evidence="2">Nucleus</location>
    </subcellularLocation>
    <text evidence="2">Localized in cytoplasmic mRNP granules containing untranslated mRNAs.</text>
</comment>
<comment type="PTM">
    <molecule>Actin, cytoplasmic 1</molecule>
    <text evidence="2">N-terminal cleavage of acetylated methionine of immature cytoplasmic actin by ACTMAP.</text>
</comment>
<comment type="PTM">
    <text evidence="2">ISGylated.</text>
</comment>
<comment type="PTM">
    <text evidence="3">Oxidation of Met-44 and Met-47 by MICALs (MICAL1, MICAL2 or MICAL3) to form methionine sulfoxide promotes actin filament depolymerization. MICAL1 and MICAL2 produce the (R)-S-oxide form. The (R)-S-oxide form is reverted by MSRB1 and MSRB2, which promote actin repolymerization.</text>
</comment>
<comment type="PTM">
    <text evidence="2">Monomethylation at Lys-84 (K84me1) regulates actin-myosin interaction and actomyosin-dependent processes. Demethylation by ALKBH4 is required for maintaining actomyosin dynamics supporting normal cleavage furrow ingression during cytokinesis and cell migration.</text>
</comment>
<comment type="PTM">
    <molecule>Actin, cytoplasmic 1, N-terminally processed</molecule>
    <text evidence="2">N-terminal acetylation by NAA80 affects actin filament depolymerization and elongation, including elongation driven by formins. In contrast, filament nucleation by the Arp2/3 complex is not affected.</text>
</comment>
<comment type="PTM">
    <text evidence="2 3">Methylated at His-73 by SETD3 (By similarity). Methylation at His-73 is required for smooth muscle contraction of the laboring uterus during delivery (By similarity).</text>
</comment>
<comment type="miscellaneous">
    <text evidence="2">In vertebrates 3 main groups of actin isoforms, alpha, beta and gamma have been identified. The alpha actins are found in muscle tissues and are a major constituent of the contractile apparatus. The beta and gamma actins coexist in most cell types as components of the cytoskeleton and as mediators of internal cell motility.</text>
</comment>
<comment type="similarity">
    <text evidence="6">Belongs to the actin family.</text>
</comment>
<accession>Q76N69</accession>
<reference key="1">
    <citation type="submission" date="1997-05" db="EMBL/GenBank/DDBJ databases">
        <title>Cloning and sequencing of complementary DNAs encoding alpha-2-HS glycoprotein, alpha-1-antitrypsin, and beta-actin from African green monkey, Cercopithecus aethiops.</title>
        <authorList>
            <person name="Yoshida K."/>
            <person name="Suzuki Y."/>
            <person name="Yamamoto K."/>
            <person name="Watanabe M."/>
            <person name="Sinohara H."/>
        </authorList>
    </citation>
    <scope>NUCLEOTIDE SEQUENCE [MRNA]</scope>
    <source>
        <tissue>Kidney</tissue>
    </source>
</reference>
<sequence>MDDDIAALVVDNGSGMCKAGFAGDDAPRAVFPSIVGRPRHQGVMVGMGQKDSYVGDEAQSKRGILTLKYPIEHGIVTNWDDMEKIWHHTFYNELRVAPEEHPVLLTEAPLNPKANREKMTQIMFETFNTPAMYVAIQAVLSLYASGRTTGIVMDSGDGVTHTVPIYEGYALPHAILRLDLAGRDLTDYLMKILTERGYSFTTTAEREIVRDIKEKLCYVALDFEQEMATAASSSSLEKSYELPDGQVITIGNERFRCPEALFQPSFLGMESCGIHETTFNSIMKCDVDIRKDLYANTVLSGGTTMYPGIADRMQKEITALAPSTMKIKIIAPPERKYSVWIGGSILASLSTFQQMWISKQEYDESGPSIVHRKCF</sequence>
<keyword id="KW-0007">Acetylation</keyword>
<keyword id="KW-0067">ATP-binding</keyword>
<keyword id="KW-0963">Cytoplasm</keyword>
<keyword id="KW-0206">Cytoskeleton</keyword>
<keyword id="KW-0378">Hydrolase</keyword>
<keyword id="KW-0488">Methylation</keyword>
<keyword id="KW-0547">Nucleotide-binding</keyword>
<keyword id="KW-0539">Nucleus</keyword>
<keyword id="KW-0558">Oxidation</keyword>
<keyword id="KW-0832">Ubl conjugation</keyword>
<organism>
    <name type="scientific">Chlorocebus aethiops</name>
    <name type="common">Green monkey</name>
    <name type="synonym">Cercopithecus aethiops</name>
    <dbReference type="NCBI Taxonomy" id="9534"/>
    <lineage>
        <taxon>Eukaryota</taxon>
        <taxon>Metazoa</taxon>
        <taxon>Chordata</taxon>
        <taxon>Craniata</taxon>
        <taxon>Vertebrata</taxon>
        <taxon>Euteleostomi</taxon>
        <taxon>Mammalia</taxon>
        <taxon>Eutheria</taxon>
        <taxon>Euarchontoglires</taxon>
        <taxon>Primates</taxon>
        <taxon>Haplorrhini</taxon>
        <taxon>Catarrhini</taxon>
        <taxon>Cercopithecidae</taxon>
        <taxon>Cercopithecinae</taxon>
        <taxon>Chlorocebus</taxon>
    </lineage>
</organism>
<proteinExistence type="evidence at transcript level"/>
<evidence type="ECO:0000250" key="1">
    <source>
        <dbReference type="UniProtKB" id="O18840"/>
    </source>
</evidence>
<evidence type="ECO:0000250" key="2">
    <source>
        <dbReference type="UniProtKB" id="P60709"/>
    </source>
</evidence>
<evidence type="ECO:0000250" key="3">
    <source>
        <dbReference type="UniProtKB" id="P60710"/>
    </source>
</evidence>
<evidence type="ECO:0000250" key="4">
    <source>
        <dbReference type="UniProtKB" id="P68137"/>
    </source>
</evidence>
<evidence type="ECO:0000250" key="5">
    <source>
        <dbReference type="UniProtKB" id="Q6QAQ1"/>
    </source>
</evidence>
<evidence type="ECO:0000305" key="6"/>